<comment type="function">
    <text evidence="1 2 3">Blocks Z-ring formation in the mother cell during sporulation by inhibiting the polymerization of FtsZ (PubMed:18284588, PubMed:23237472, PubMed:25848052). Binds to the minus end of FtsZ and functions as a filament-capping protein (PubMed:25848052). At high concentrations, is capable of both capping and sequestration of FtsZ (PubMed:25848052). Decreases the GTPase activity of FtsZ (PubMed:18284588, PubMed:23237472, PubMed:25848052).</text>
</comment>
<comment type="activity regulation">
    <text evidence="1 2">Highly effective in inhibiting polymerization at low and intermediate concentrations of GTP and only partially effective at high GTP concentrations.</text>
</comment>
<comment type="subunit">
    <text evidence="1 2 3">Interacts with FtsZ (PubMed:18284588, PubMed:23237472, PubMed:25848052). Binds to the C-terminal polymerization interface of FtsZ (PubMed:25848052). Binds to FtsZ filaments (PubMed:25848052).</text>
</comment>
<comment type="developmental stage">
    <text evidence="1">Expressed at an intermediate stage of sporulation.</text>
</comment>
<comment type="induction">
    <text evidence="1">Expression is regulated by the mother cell-specific factor sigma E.</text>
</comment>
<comment type="caution">
    <text evidence="7 8">Ray et al suggested that MciZ competes with GTP for binding to FtsZ, but Bisson-Filho et al showed later that MciZ and GTP bind at opposite surfaces of FtsZ, and that MciZ does not compete with GTP binding.</text>
</comment>
<accession>L8EBJ9</accession>
<protein>
    <recommendedName>
        <fullName evidence="6">Cell division inhibitor MciZ</fullName>
    </recommendedName>
    <alternativeName>
        <fullName evidence="5">FtsZ assembly inhibitor</fullName>
    </alternativeName>
    <alternativeName>
        <fullName evidence="4">Mother cell inhibitor of FtsZ</fullName>
    </alternativeName>
</protein>
<dbReference type="EMBL" id="AL009126">
    <property type="protein sequence ID" value="CCQ48600.1"/>
    <property type="molecule type" value="Genomic_DNA"/>
</dbReference>
<dbReference type="RefSeq" id="WP_003230420.1">
    <property type="nucleotide sequence ID" value="NZ_OZ025638.1"/>
</dbReference>
<dbReference type="RefSeq" id="YP_009513976.1">
    <property type="nucleotide sequence ID" value="NC_000964.3"/>
</dbReference>
<dbReference type="PDB" id="2MRW">
    <property type="method" value="NMR"/>
    <property type="chains" value="A=1-40"/>
</dbReference>
<dbReference type="PDB" id="4U39">
    <property type="method" value="X-ray"/>
    <property type="resolution" value="3.19 A"/>
    <property type="chains" value="J/K/L/M/N/O/P/Q/R=1-40"/>
</dbReference>
<dbReference type="PDBsum" id="2MRW"/>
<dbReference type="PDBsum" id="4U39"/>
<dbReference type="SMR" id="L8EBJ9"/>
<dbReference type="STRING" id="224308.BSU23616"/>
<dbReference type="PaxDb" id="224308-BSU23616"/>
<dbReference type="EnsemblBacteria" id="CCQ48600">
    <property type="protein sequence ID" value="CCQ48600"/>
    <property type="gene ID" value="BSU_23616"/>
</dbReference>
<dbReference type="GeneID" id="37862900"/>
<dbReference type="PATRIC" id="fig|224308.179.peg.2574"/>
<dbReference type="InParanoid" id="L8EBJ9"/>
<dbReference type="OrthoDB" id="2990038at2"/>
<dbReference type="BioCyc" id="BSUB:MONOMER8J2-50"/>
<dbReference type="EvolutionaryTrace" id="L8EBJ9"/>
<dbReference type="Proteomes" id="UP000001570">
    <property type="component" value="Chromosome"/>
</dbReference>
<dbReference type="GO" id="GO:0030435">
    <property type="term" value="P:sporulation resulting in formation of a cellular spore"/>
    <property type="evidence" value="ECO:0007669"/>
    <property type="project" value="UniProtKB-KW"/>
</dbReference>
<dbReference type="InterPro" id="IPR025177">
    <property type="entry name" value="MciZ"/>
</dbReference>
<dbReference type="Pfam" id="PF13072">
    <property type="entry name" value="MciZ"/>
    <property type="match status" value="1"/>
</dbReference>
<reference key="1">
    <citation type="journal article" date="1997" name="Nature">
        <title>The complete genome sequence of the Gram-positive bacterium Bacillus subtilis.</title>
        <authorList>
            <person name="Kunst F."/>
            <person name="Ogasawara N."/>
            <person name="Moszer I."/>
            <person name="Albertini A.M."/>
            <person name="Alloni G."/>
            <person name="Azevedo V."/>
            <person name="Bertero M.G."/>
            <person name="Bessieres P."/>
            <person name="Bolotin A."/>
            <person name="Borchert S."/>
            <person name="Borriss R."/>
            <person name="Boursier L."/>
            <person name="Brans A."/>
            <person name="Braun M."/>
            <person name="Brignell S.C."/>
            <person name="Bron S."/>
            <person name="Brouillet S."/>
            <person name="Bruschi C.V."/>
            <person name="Caldwell B."/>
            <person name="Capuano V."/>
            <person name="Carter N.M."/>
            <person name="Choi S.-K."/>
            <person name="Codani J.-J."/>
            <person name="Connerton I.F."/>
            <person name="Cummings N.J."/>
            <person name="Daniel R.A."/>
            <person name="Denizot F."/>
            <person name="Devine K.M."/>
            <person name="Duesterhoeft A."/>
            <person name="Ehrlich S.D."/>
            <person name="Emmerson P.T."/>
            <person name="Entian K.-D."/>
            <person name="Errington J."/>
            <person name="Fabret C."/>
            <person name="Ferrari E."/>
            <person name="Foulger D."/>
            <person name="Fritz C."/>
            <person name="Fujita M."/>
            <person name="Fujita Y."/>
            <person name="Fuma S."/>
            <person name="Galizzi A."/>
            <person name="Galleron N."/>
            <person name="Ghim S.-Y."/>
            <person name="Glaser P."/>
            <person name="Goffeau A."/>
            <person name="Golightly E.J."/>
            <person name="Grandi G."/>
            <person name="Guiseppi G."/>
            <person name="Guy B.J."/>
            <person name="Haga K."/>
            <person name="Haiech J."/>
            <person name="Harwood C.R."/>
            <person name="Henaut A."/>
            <person name="Hilbert H."/>
            <person name="Holsappel S."/>
            <person name="Hosono S."/>
            <person name="Hullo M.-F."/>
            <person name="Itaya M."/>
            <person name="Jones L.-M."/>
            <person name="Joris B."/>
            <person name="Karamata D."/>
            <person name="Kasahara Y."/>
            <person name="Klaerr-Blanchard M."/>
            <person name="Klein C."/>
            <person name="Kobayashi Y."/>
            <person name="Koetter P."/>
            <person name="Koningstein G."/>
            <person name="Krogh S."/>
            <person name="Kumano M."/>
            <person name="Kurita K."/>
            <person name="Lapidus A."/>
            <person name="Lardinois S."/>
            <person name="Lauber J."/>
            <person name="Lazarevic V."/>
            <person name="Lee S.-M."/>
            <person name="Levine A."/>
            <person name="Liu H."/>
            <person name="Masuda S."/>
            <person name="Mauel C."/>
            <person name="Medigue C."/>
            <person name="Medina N."/>
            <person name="Mellado R.P."/>
            <person name="Mizuno M."/>
            <person name="Moestl D."/>
            <person name="Nakai S."/>
            <person name="Noback M."/>
            <person name="Noone D."/>
            <person name="O'Reilly M."/>
            <person name="Ogawa K."/>
            <person name="Ogiwara A."/>
            <person name="Oudega B."/>
            <person name="Park S.-H."/>
            <person name="Parro V."/>
            <person name="Pohl T.M."/>
            <person name="Portetelle D."/>
            <person name="Porwollik S."/>
            <person name="Prescott A.M."/>
            <person name="Presecan E."/>
            <person name="Pujic P."/>
            <person name="Purnelle B."/>
            <person name="Rapoport G."/>
            <person name="Rey M."/>
            <person name="Reynolds S."/>
            <person name="Rieger M."/>
            <person name="Rivolta C."/>
            <person name="Rocha E."/>
            <person name="Roche B."/>
            <person name="Rose M."/>
            <person name="Sadaie Y."/>
            <person name="Sato T."/>
            <person name="Scanlan E."/>
            <person name="Schleich S."/>
            <person name="Schroeter R."/>
            <person name="Scoffone F."/>
            <person name="Sekiguchi J."/>
            <person name="Sekowska A."/>
            <person name="Seror S.J."/>
            <person name="Serror P."/>
            <person name="Shin B.-S."/>
            <person name="Soldo B."/>
            <person name="Sorokin A."/>
            <person name="Tacconi E."/>
            <person name="Takagi T."/>
            <person name="Takahashi H."/>
            <person name="Takemaru K."/>
            <person name="Takeuchi M."/>
            <person name="Tamakoshi A."/>
            <person name="Tanaka T."/>
            <person name="Terpstra P."/>
            <person name="Tognoni A."/>
            <person name="Tosato V."/>
            <person name="Uchiyama S."/>
            <person name="Vandenbol M."/>
            <person name="Vannier F."/>
            <person name="Vassarotti A."/>
            <person name="Viari A."/>
            <person name="Wambutt R."/>
            <person name="Wedler E."/>
            <person name="Wedler H."/>
            <person name="Weitzenegger T."/>
            <person name="Winters P."/>
            <person name="Wipat A."/>
            <person name="Yamamoto H."/>
            <person name="Yamane K."/>
            <person name="Yasumoto K."/>
            <person name="Yata K."/>
            <person name="Yoshida K."/>
            <person name="Yoshikawa H.-F."/>
            <person name="Zumstein E."/>
            <person name="Yoshikawa H."/>
            <person name="Danchin A."/>
        </authorList>
    </citation>
    <scope>NUCLEOTIDE SEQUENCE [LARGE SCALE GENOMIC DNA]</scope>
    <source>
        <strain>168</strain>
    </source>
</reference>
<reference key="2">
    <citation type="journal article" date="2008" name="Mol. Microbiol.">
        <title>Peptide inhibitor of cytokinesis during sporulation in Bacillus subtilis.</title>
        <authorList>
            <person name="Handler A.A."/>
            <person name="Lim J.E."/>
            <person name="Losick R."/>
        </authorList>
    </citation>
    <scope>IDENTIFICATION</scope>
    <scope>FUNCTION</scope>
    <scope>ACTIVITY REGULATION</scope>
    <scope>INTERACTION WITH FTSZ</scope>
    <scope>DEVELOPMENTAL STAGE</scope>
    <scope>INDUCTION</scope>
    <source>
        <strain>168 / PY79</strain>
    </source>
</reference>
<reference key="3">
    <citation type="journal article" date="2013" name="Biochemistry">
        <title>GTP regulates the interaction between MciZ and FtsZ: a possible role of MciZ in bacterial cell division.</title>
        <authorList>
            <person name="Ray S."/>
            <person name="Kumar A."/>
            <person name="Panda D."/>
        </authorList>
    </citation>
    <scope>FUNCTION</scope>
    <scope>ACTIVITY REGULATION</scope>
    <scope>INTERACTION WITH FTSZ</scope>
</reference>
<reference evidence="10 11" key="4">
    <citation type="journal article" date="2015" name="Proc. Natl. Acad. Sci. U.S.A.">
        <title>FtsZ filament capping by MciZ, a developmental regulator of bacterial division.</title>
        <authorList>
            <person name="Bisson-Filho A.W."/>
            <person name="Discola K.F."/>
            <person name="Castellen P."/>
            <person name="Blasios V."/>
            <person name="Martins A."/>
            <person name="Sforca M.L."/>
            <person name="Garcia W."/>
            <person name="Zeri A.C."/>
            <person name="Erickson H.P."/>
            <person name="Dessen A."/>
            <person name="Gueiros-Filho F.J."/>
        </authorList>
    </citation>
    <scope>X-RAY CRYSTALLOGRAPHY (3.19 ANGSTROMS) IN COMPLEX WITH FTSZ</scope>
    <scope>STRUCTURE BY NMR</scope>
    <scope>FUNCTION</scope>
    <scope>SUBUNIT</scope>
    <scope>INTERACTION WITH FTSZ</scope>
    <scope>MUTAGENESIS OF ARG-20</scope>
    <source>
        <strain>168 / PY79</strain>
    </source>
</reference>
<organism>
    <name type="scientific">Bacillus subtilis (strain 168)</name>
    <dbReference type="NCBI Taxonomy" id="224308"/>
    <lineage>
        <taxon>Bacteria</taxon>
        <taxon>Bacillati</taxon>
        <taxon>Bacillota</taxon>
        <taxon>Bacilli</taxon>
        <taxon>Bacillales</taxon>
        <taxon>Bacillaceae</taxon>
        <taxon>Bacillus</taxon>
    </lineage>
</organism>
<gene>
    <name evidence="4" type="primary">mciZ</name>
    <name evidence="9" type="ordered locus">BSU_23616</name>
</gene>
<feature type="chain" id="PRO_0000444620" description="Cell division inhibitor MciZ">
    <location>
        <begin position="1"/>
        <end position="40"/>
    </location>
</feature>
<feature type="mutagenesis site" description="Disrupts interaction with FtsZ." evidence="3">
    <original>R</original>
    <variation>D</variation>
    <location>
        <position position="20"/>
    </location>
</feature>
<feature type="strand" evidence="12">
    <location>
        <begin position="3"/>
        <end position="6"/>
    </location>
</feature>
<feature type="strand" evidence="12">
    <location>
        <begin position="9"/>
        <end position="15"/>
    </location>
</feature>
<feature type="helix" evidence="12">
    <location>
        <begin position="16"/>
        <end position="29"/>
    </location>
</feature>
<feature type="helix" evidence="12">
    <location>
        <begin position="33"/>
        <end position="36"/>
    </location>
</feature>
<sequence length="40" mass="4775">MKVHRMPKGVVLVGKAWEIRAKLKEYGRTFQYVKDWISKP</sequence>
<proteinExistence type="evidence at protein level"/>
<name>MCIZ_BACSU</name>
<evidence type="ECO:0000269" key="1">
    <source>
    </source>
</evidence>
<evidence type="ECO:0000269" key="2">
    <source>
    </source>
</evidence>
<evidence type="ECO:0000269" key="3">
    <source>
    </source>
</evidence>
<evidence type="ECO:0000303" key="4">
    <source>
    </source>
</evidence>
<evidence type="ECO:0000303" key="5">
    <source>
    </source>
</evidence>
<evidence type="ECO:0000305" key="6"/>
<evidence type="ECO:0000305" key="7">
    <source>
    </source>
</evidence>
<evidence type="ECO:0000305" key="8">
    <source>
    </source>
</evidence>
<evidence type="ECO:0000312" key="9">
    <source>
        <dbReference type="EMBL" id="CCQ48600.1"/>
    </source>
</evidence>
<evidence type="ECO:0007744" key="10">
    <source>
        <dbReference type="PDB" id="2MRW"/>
    </source>
</evidence>
<evidence type="ECO:0007744" key="11">
    <source>
        <dbReference type="PDB" id="4U39"/>
    </source>
</evidence>
<evidence type="ECO:0007829" key="12">
    <source>
        <dbReference type="PDB" id="4U39"/>
    </source>
</evidence>
<keyword id="KW-0002">3D-structure</keyword>
<keyword id="KW-1185">Reference proteome</keyword>
<keyword id="KW-0749">Sporulation</keyword>